<organism>
    <name type="scientific">Drosophila persimilis</name>
    <name type="common">Fruit fly</name>
    <dbReference type="NCBI Taxonomy" id="7234"/>
    <lineage>
        <taxon>Eukaryota</taxon>
        <taxon>Metazoa</taxon>
        <taxon>Ecdysozoa</taxon>
        <taxon>Arthropoda</taxon>
        <taxon>Hexapoda</taxon>
        <taxon>Insecta</taxon>
        <taxon>Pterygota</taxon>
        <taxon>Neoptera</taxon>
        <taxon>Endopterygota</taxon>
        <taxon>Diptera</taxon>
        <taxon>Brachycera</taxon>
        <taxon>Muscomorpha</taxon>
        <taxon>Ephydroidea</taxon>
        <taxon>Drosophilidae</taxon>
        <taxon>Drosophila</taxon>
        <taxon>Sophophora</taxon>
    </lineage>
</organism>
<evidence type="ECO:0000250" key="1"/>
<evidence type="ECO:0000255" key="2"/>
<evidence type="ECO:0000305" key="3"/>
<protein>
    <recommendedName>
        <fullName>Probable cytosolic Fe-S cluster assembly factor GL21135</fullName>
    </recommendedName>
</protein>
<feature type="chain" id="PRO_0000383704" description="Probable cytosolic Fe-S cluster assembly factor GL21135">
    <location>
        <begin position="1"/>
        <end position="477"/>
    </location>
</feature>
<feature type="binding site" evidence="2">
    <location>
        <position position="23"/>
    </location>
    <ligand>
        <name>[4Fe-4S] cluster</name>
        <dbReference type="ChEBI" id="CHEBI:49883"/>
        <label>1</label>
    </ligand>
</feature>
<feature type="binding site" evidence="2">
    <location>
        <position position="69"/>
    </location>
    <ligand>
        <name>[4Fe-4S] cluster</name>
        <dbReference type="ChEBI" id="CHEBI:49883"/>
        <label>1</label>
    </ligand>
</feature>
<feature type="binding site" evidence="2">
    <location>
        <position position="72"/>
    </location>
    <ligand>
        <name>[4Fe-4S] cluster</name>
        <dbReference type="ChEBI" id="CHEBI:49883"/>
        <label>1</label>
    </ligand>
</feature>
<feature type="binding site" evidence="2">
    <location>
        <position position="75"/>
    </location>
    <ligand>
        <name>[4Fe-4S] cluster</name>
        <dbReference type="ChEBI" id="CHEBI:49883"/>
        <label>1</label>
    </ligand>
</feature>
<feature type="binding site" evidence="2">
    <location>
        <position position="188"/>
    </location>
    <ligand>
        <name>[4Fe-4S] cluster</name>
        <dbReference type="ChEBI" id="CHEBI:49883"/>
        <label>2</label>
    </ligand>
</feature>
<feature type="binding site" evidence="2">
    <location>
        <position position="244"/>
    </location>
    <ligand>
        <name>[4Fe-4S] cluster</name>
        <dbReference type="ChEBI" id="CHEBI:49883"/>
        <label>2</label>
    </ligand>
</feature>
<feature type="binding site" evidence="2">
    <location>
        <position position="396"/>
    </location>
    <ligand>
        <name>[4Fe-4S] cluster</name>
        <dbReference type="ChEBI" id="CHEBI:49883"/>
        <label>2</label>
    </ligand>
</feature>
<feature type="binding site" evidence="2">
    <location>
        <position position="400"/>
    </location>
    <ligand>
        <name>[4Fe-4S] cluster</name>
        <dbReference type="ChEBI" id="CHEBI:49883"/>
        <label>2</label>
    </ligand>
</feature>
<proteinExistence type="inferred from homology"/>
<accession>B4GXC8</accession>
<comment type="function">
    <text evidence="1">Component of the cytosolic iron-sulfur (Fe/S) protein assembly machinery. Required for maturation of extramitochondrial Fe/S proteins (By similarity).</text>
</comment>
<comment type="similarity">
    <text evidence="3">Belongs to the NARF family.</text>
</comment>
<sequence length="477" mass="54068">MSRFSGALQLTDLDDFITPSQECIKPVTVDKTATSKTGAKITVQEDGYYEESESGKQKLQKVEITLQDCLACSGCITSAESVLITQQSEEELLKVLRENAKVKATGDMEQVRTIVFTIATQPLLSLAHRYQLSAEETARHLAGYFRSLGVDYVLCTKVADDLALLECQQEFVERYRDNEELTMLSSSCPGWVCYAEKTHGNFILPYIATTRSPQQIMGVLVKQFLAEKLNIPGSRIYHVTVMPCYDKKLEASRMDFYSEVNESRDVDCVITSVEVEQMLNEDERSLSEHEASDLDWPWSEQRPESMVWSHEATLSGGYAEHIFKFAAKELFNEAPPTELSFKQLRNRDFREISLEKDDKTVLKFAIANGFRNIQNLVQKLKRGKGASYHFVEVMACPSGCINGGAQVRPTTGQHVRELTQQLEELYKKLPRSQPDNAHTKLIYRDFLDGSHTDKSNELLHTSYHAVEKLSTALNIKW</sequence>
<dbReference type="EMBL" id="CH479195">
    <property type="protein sequence ID" value="EDW27239.1"/>
    <property type="molecule type" value="Genomic_DNA"/>
</dbReference>
<dbReference type="SMR" id="B4GXC8"/>
<dbReference type="STRING" id="7234.B4GXC8"/>
<dbReference type="EnsemblMetazoa" id="FBtr0186750">
    <property type="protein sequence ID" value="FBpp0185242"/>
    <property type="gene ID" value="FBgn0158729"/>
</dbReference>
<dbReference type="EnsemblMetazoa" id="XM_002023075.2">
    <property type="protein sequence ID" value="XP_002023111.1"/>
    <property type="gene ID" value="LOC6597973"/>
</dbReference>
<dbReference type="GeneID" id="6597973"/>
<dbReference type="KEGG" id="dpe:6597973"/>
<dbReference type="eggNOG" id="KOG2439">
    <property type="taxonomic scope" value="Eukaryota"/>
</dbReference>
<dbReference type="HOGENOM" id="CLU_018240_0_0_1"/>
<dbReference type="OMA" id="GYLHHVL"/>
<dbReference type="OrthoDB" id="10253113at2759"/>
<dbReference type="PhylomeDB" id="B4GXC8"/>
<dbReference type="Proteomes" id="UP000008744">
    <property type="component" value="Unassembled WGS sequence"/>
</dbReference>
<dbReference type="GO" id="GO:0051539">
    <property type="term" value="F:4 iron, 4 sulfur cluster binding"/>
    <property type="evidence" value="ECO:0007669"/>
    <property type="project" value="UniProtKB-KW"/>
</dbReference>
<dbReference type="GO" id="GO:0046872">
    <property type="term" value="F:metal ion binding"/>
    <property type="evidence" value="ECO:0007669"/>
    <property type="project" value="UniProtKB-KW"/>
</dbReference>
<dbReference type="GO" id="GO:0016226">
    <property type="term" value="P:iron-sulfur cluster assembly"/>
    <property type="evidence" value="ECO:0000250"/>
    <property type="project" value="UniProtKB"/>
</dbReference>
<dbReference type="FunFam" id="3.30.70.20:FF:000042">
    <property type="entry name" value="Cytosolic Fe-S cluster assembly factor NAR1"/>
    <property type="match status" value="1"/>
</dbReference>
<dbReference type="Gene3D" id="3.40.50.1780">
    <property type="match status" value="1"/>
</dbReference>
<dbReference type="Gene3D" id="3.40.950.10">
    <property type="entry name" value="Fe-only Hydrogenase (Larger Subunit), Chain L, domain 3"/>
    <property type="match status" value="1"/>
</dbReference>
<dbReference type="InterPro" id="IPR050340">
    <property type="entry name" value="Cytosolic_Fe-S_CAF"/>
</dbReference>
<dbReference type="InterPro" id="IPR009016">
    <property type="entry name" value="Fe_hydrogenase"/>
</dbReference>
<dbReference type="InterPro" id="IPR004108">
    <property type="entry name" value="Fe_hydrogenase_lsu_C"/>
</dbReference>
<dbReference type="InterPro" id="IPR003149">
    <property type="entry name" value="Fe_hydrogenase_ssu"/>
</dbReference>
<dbReference type="PANTHER" id="PTHR11615">
    <property type="entry name" value="NITRATE, FORMATE, IRON DEHYDROGENASE"/>
    <property type="match status" value="1"/>
</dbReference>
<dbReference type="Pfam" id="PF02906">
    <property type="entry name" value="Fe_hyd_lg_C"/>
    <property type="match status" value="1"/>
</dbReference>
<dbReference type="Pfam" id="PF02256">
    <property type="entry name" value="Fe_hyd_SSU"/>
    <property type="match status" value="1"/>
</dbReference>
<dbReference type="SMART" id="SM00902">
    <property type="entry name" value="Fe_hyd_SSU"/>
    <property type="match status" value="1"/>
</dbReference>
<dbReference type="SUPFAM" id="SSF53920">
    <property type="entry name" value="Fe-only hydrogenase"/>
    <property type="match status" value="1"/>
</dbReference>
<name>NARF_DROPE</name>
<gene>
    <name type="ORF">GL21135</name>
</gene>
<keyword id="KW-0004">4Fe-4S</keyword>
<keyword id="KW-0408">Iron</keyword>
<keyword id="KW-0411">Iron-sulfur</keyword>
<keyword id="KW-0479">Metal-binding</keyword>
<keyword id="KW-1185">Reference proteome</keyword>
<reference key="1">
    <citation type="journal article" date="2007" name="Nature">
        <title>Evolution of genes and genomes on the Drosophila phylogeny.</title>
        <authorList>
            <consortium name="Drosophila 12 genomes consortium"/>
        </authorList>
    </citation>
    <scope>NUCLEOTIDE SEQUENCE [LARGE SCALE GENOMIC DNA]</scope>
    <source>
        <strain>MSH-3 / Tucson 14011-0111.49</strain>
    </source>
</reference>